<keyword id="KW-0002">3D-structure</keyword>
<keyword id="KW-0007">Acetylation</keyword>
<keyword id="KW-0903">Direct protein sequencing</keyword>
<keyword id="KW-0249">Electron transport</keyword>
<keyword id="KW-0274">FAD</keyword>
<keyword id="KW-0285">Flavoprotein</keyword>
<keyword id="KW-0496">Mitochondrion</keyword>
<keyword id="KW-0597">Phosphoprotein</keyword>
<keyword id="KW-1185">Reference proteome</keyword>
<keyword id="KW-0679">Respiratory chain</keyword>
<keyword id="KW-0809">Transit peptide</keyword>
<keyword id="KW-0813">Transport</keyword>
<sequence>MALRLLRLVPASAPARGLAAGAQRVGRIHTSVHCKLRYGLLAAILGDKTTKKLHEYSRVITVDGNICSGKNKLAKEIAQQLGMKHYPEAGIQYSSTTTGDGRPLDIEFSGSCSLEKFYDDPKSNDGNSYRLQSWLYASRLLQYADALEHLLSTGQGVVLERSIYSDFVFLEAMYNQGYIRKQCVDHYNEIKRLTLPEYLPPHAVIYIDVPVPEVQSRIQKKGDPHEMKVTSAYLQDIENAYKKTFLPKMSEMCEVLVYDSWEAEDPTKVVEDIEYLKYNKGPWLKQDDWTFHYLRMLVQDKTEVLNYTTIPVYLPEITIGAHQGSRIYNSFRELPGRKYAPGYNAEVGDKWIWLK</sequence>
<evidence type="ECO:0000250" key="1">
    <source>
        <dbReference type="UniProtKB" id="P34942"/>
    </source>
</evidence>
<evidence type="ECO:0000269" key="2">
    <source>
    </source>
</evidence>
<evidence type="ECO:0000269" key="3">
    <source>
    </source>
</evidence>
<evidence type="ECO:0000305" key="4"/>
<evidence type="ECO:0007744" key="5">
    <source>
        <dbReference type="PDB" id="8PW5"/>
    </source>
</evidence>
<evidence type="ECO:0007744" key="6">
    <source>
    </source>
</evidence>
<evidence type="ECO:0007744" key="7">
    <source>
    </source>
</evidence>
<evidence type="ECO:0007829" key="8">
    <source>
        <dbReference type="PDB" id="7AK5"/>
    </source>
</evidence>
<evidence type="ECO:0007829" key="9">
    <source>
        <dbReference type="PDB" id="8OM1"/>
    </source>
</evidence>
<evidence type="ECO:0007829" key="10">
    <source>
        <dbReference type="PDB" id="8RGR"/>
    </source>
</evidence>
<dbReference type="EMBL" id="BC003439">
    <property type="protein sequence ID" value="AAH03439.1"/>
    <property type="molecule type" value="mRNA"/>
</dbReference>
<dbReference type="EMBL" id="AK005339">
    <property type="protein sequence ID" value="BAB23961.2"/>
    <property type="status" value="ALT_INIT"/>
    <property type="molecule type" value="mRNA"/>
</dbReference>
<dbReference type="EMBL" id="AK145979">
    <property type="protein sequence ID" value="BAE26801.1"/>
    <property type="molecule type" value="mRNA"/>
</dbReference>
<dbReference type="EMBL" id="AK046292">
    <property type="protein sequence ID" value="BAC32674.1"/>
    <property type="molecule type" value="mRNA"/>
</dbReference>
<dbReference type="CCDS" id="CCDS15167.1"/>
<dbReference type="RefSeq" id="NP_077159.1">
    <property type="nucleotide sequence ID" value="NM_024197.1"/>
</dbReference>
<dbReference type="PDB" id="6G2J">
    <property type="method" value="EM"/>
    <property type="resolution" value="3.30 A"/>
    <property type="chains" value="O=1-355"/>
</dbReference>
<dbReference type="PDB" id="6G72">
    <property type="method" value="EM"/>
    <property type="resolution" value="3.90 A"/>
    <property type="chains" value="O=1-355"/>
</dbReference>
<dbReference type="PDB" id="6ZR2">
    <property type="method" value="EM"/>
    <property type="resolution" value="3.10 A"/>
    <property type="chains" value="O=1-355"/>
</dbReference>
<dbReference type="PDB" id="6ZTQ">
    <property type="method" value="EM"/>
    <property type="resolution" value="3.00 A"/>
    <property type="chains" value="O=1-355"/>
</dbReference>
<dbReference type="PDB" id="7AK5">
    <property type="method" value="EM"/>
    <property type="resolution" value="3.17 A"/>
    <property type="chains" value="O=1-355"/>
</dbReference>
<dbReference type="PDB" id="7AK6">
    <property type="method" value="EM"/>
    <property type="resolution" value="3.82 A"/>
    <property type="chains" value="O=1-355"/>
</dbReference>
<dbReference type="PDB" id="7B93">
    <property type="method" value="EM"/>
    <property type="resolution" value="3.04 A"/>
    <property type="chains" value="O=1-355"/>
</dbReference>
<dbReference type="PDB" id="7PSA">
    <property type="method" value="EM"/>
    <property type="resolution" value="3.40 A"/>
    <property type="chains" value="O=1-355"/>
</dbReference>
<dbReference type="PDB" id="8C2S">
    <property type="method" value="EM"/>
    <property type="resolution" value="3.90 A"/>
    <property type="chains" value="O=1-355"/>
</dbReference>
<dbReference type="PDB" id="8CA3">
    <property type="method" value="EM"/>
    <property type="resolution" value="3.20 A"/>
    <property type="chains" value="O=1-355"/>
</dbReference>
<dbReference type="PDB" id="8CA5">
    <property type="method" value="EM"/>
    <property type="resolution" value="3.90 A"/>
    <property type="chains" value="O=1-355"/>
</dbReference>
<dbReference type="PDB" id="8IAO">
    <property type="method" value="EM"/>
    <property type="resolution" value="4.20 A"/>
    <property type="chains" value="O=1-355"/>
</dbReference>
<dbReference type="PDB" id="8IAQ">
    <property type="method" value="EM"/>
    <property type="resolution" value="3.40 A"/>
    <property type="chains" value="O=1-355"/>
</dbReference>
<dbReference type="PDB" id="8IB4">
    <property type="method" value="EM"/>
    <property type="resolution" value="4.30 A"/>
    <property type="chains" value="O=1-355"/>
</dbReference>
<dbReference type="PDB" id="8IB6">
    <property type="method" value="EM"/>
    <property type="resolution" value="3.30 A"/>
    <property type="chains" value="O=1-355"/>
</dbReference>
<dbReference type="PDB" id="8IB9">
    <property type="method" value="EM"/>
    <property type="resolution" value="4.30 A"/>
    <property type="chains" value="O=1-355"/>
</dbReference>
<dbReference type="PDB" id="8IBB">
    <property type="method" value="EM"/>
    <property type="resolution" value="3.30 A"/>
    <property type="chains" value="O=1-355"/>
</dbReference>
<dbReference type="PDB" id="8IBD">
    <property type="method" value="EM"/>
    <property type="resolution" value="4.20 A"/>
    <property type="chains" value="O=1-355"/>
</dbReference>
<dbReference type="PDB" id="8IBF">
    <property type="method" value="EM"/>
    <property type="resolution" value="3.30 A"/>
    <property type="chains" value="O=1-355"/>
</dbReference>
<dbReference type="PDB" id="8IC2">
    <property type="method" value="EM"/>
    <property type="resolution" value="6.30 A"/>
    <property type="chains" value="O=1-355"/>
</dbReference>
<dbReference type="PDB" id="8IC4">
    <property type="method" value="EM"/>
    <property type="resolution" value="3.20 A"/>
    <property type="chains" value="O=1-355"/>
</dbReference>
<dbReference type="PDB" id="8OLT">
    <property type="method" value="EM"/>
    <property type="resolution" value="2.84 A"/>
    <property type="chains" value="O=1-355"/>
</dbReference>
<dbReference type="PDB" id="8OM1">
    <property type="method" value="EM"/>
    <property type="resolution" value="2.39 A"/>
    <property type="chains" value="O=1-355"/>
</dbReference>
<dbReference type="PDB" id="8PW5">
    <property type="method" value="EM"/>
    <property type="resolution" value="3.60 A"/>
    <property type="chains" value="O1=1-355"/>
</dbReference>
<dbReference type="PDB" id="8PW6">
    <property type="method" value="EM"/>
    <property type="resolution" value="3.30 A"/>
    <property type="chains" value="O1=1-355"/>
</dbReference>
<dbReference type="PDB" id="8PW7">
    <property type="method" value="EM"/>
    <property type="resolution" value="3.50 A"/>
    <property type="chains" value="O1=1-355"/>
</dbReference>
<dbReference type="PDB" id="8RGP">
    <property type="method" value="EM"/>
    <property type="resolution" value="3.00 A"/>
    <property type="chains" value="O=1-355"/>
</dbReference>
<dbReference type="PDB" id="8RGQ">
    <property type="method" value="EM"/>
    <property type="resolution" value="3.00 A"/>
    <property type="chains" value="O=1-355"/>
</dbReference>
<dbReference type="PDB" id="8RGR">
    <property type="method" value="EM"/>
    <property type="resolution" value="2.90 A"/>
    <property type="chains" value="O=1-355"/>
</dbReference>
<dbReference type="PDB" id="8RGT">
    <property type="method" value="EM"/>
    <property type="resolution" value="3.10 A"/>
    <property type="chains" value="O=1-355"/>
</dbReference>
<dbReference type="PDB" id="8UCA">
    <property type="method" value="EM"/>
    <property type="resolution" value="3.70 A"/>
    <property type="chains" value="AL/al=1-355"/>
</dbReference>
<dbReference type="PDBsum" id="6G2J"/>
<dbReference type="PDBsum" id="6G72"/>
<dbReference type="PDBsum" id="6ZR2"/>
<dbReference type="PDBsum" id="6ZTQ"/>
<dbReference type="PDBsum" id="7AK5"/>
<dbReference type="PDBsum" id="7AK6"/>
<dbReference type="PDBsum" id="7B93"/>
<dbReference type="PDBsum" id="7PSA"/>
<dbReference type="PDBsum" id="8C2S"/>
<dbReference type="PDBsum" id="8CA3"/>
<dbReference type="PDBsum" id="8CA5"/>
<dbReference type="PDBsum" id="8IAO"/>
<dbReference type="PDBsum" id="8IAQ"/>
<dbReference type="PDBsum" id="8IB4"/>
<dbReference type="PDBsum" id="8IB6"/>
<dbReference type="PDBsum" id="8IB9"/>
<dbReference type="PDBsum" id="8IBB"/>
<dbReference type="PDBsum" id="8IBD"/>
<dbReference type="PDBsum" id="8IBF"/>
<dbReference type="PDBsum" id="8IC2"/>
<dbReference type="PDBsum" id="8IC4"/>
<dbReference type="PDBsum" id="8OLT"/>
<dbReference type="PDBsum" id="8OM1"/>
<dbReference type="PDBsum" id="8PW5"/>
<dbReference type="PDBsum" id="8PW6"/>
<dbReference type="PDBsum" id="8PW7"/>
<dbReference type="PDBsum" id="8RGP"/>
<dbReference type="PDBsum" id="8RGQ"/>
<dbReference type="PDBsum" id="8RGR"/>
<dbReference type="PDBsum" id="8RGT"/>
<dbReference type="PDBsum" id="8UCA"/>
<dbReference type="EMDB" id="EMD-11377"/>
<dbReference type="EMDB" id="EMD-11424"/>
<dbReference type="EMDB" id="EMD-11810"/>
<dbReference type="EMDB" id="EMD-11811"/>
<dbReference type="EMDB" id="EMD-12095"/>
<dbReference type="EMDB" id="EMD-13611"/>
<dbReference type="EMDB" id="EMD-16398"/>
<dbReference type="EMDB" id="EMD-16516"/>
<dbReference type="EMDB" id="EMD-16518"/>
<dbReference type="EMDB" id="EMD-16962"/>
<dbReference type="EMDB" id="EMD-16965"/>
<dbReference type="EMDB" id="EMD-17989"/>
<dbReference type="EMDB" id="EMD-17990"/>
<dbReference type="EMDB" id="EMD-17991"/>
<dbReference type="EMDB" id="EMD-19145"/>
<dbReference type="EMDB" id="EMD-19146"/>
<dbReference type="EMDB" id="EMD-19147"/>
<dbReference type="EMDB" id="EMD-19148"/>
<dbReference type="EMDB" id="EMD-35313"/>
<dbReference type="EMDB" id="EMD-35315"/>
<dbReference type="EMDB" id="EMD-35331"/>
<dbReference type="EMDB" id="EMD-35333"/>
<dbReference type="EMDB" id="EMD-35336"/>
<dbReference type="EMDB" id="EMD-35338"/>
<dbReference type="EMDB" id="EMD-35340"/>
<dbReference type="EMDB" id="EMD-35342"/>
<dbReference type="EMDB" id="EMD-35352"/>
<dbReference type="EMDB" id="EMD-35354"/>
<dbReference type="EMDB" id="EMD-42122"/>
<dbReference type="EMDB" id="EMD-4345"/>
<dbReference type="EMDB" id="EMD-4356"/>
<dbReference type="SMR" id="Q99LC3"/>
<dbReference type="BioGRID" id="212064">
    <property type="interactions" value="82"/>
</dbReference>
<dbReference type="ComplexPortal" id="CPX-266">
    <property type="entry name" value="Mitochondrial respiratory chain complex I"/>
</dbReference>
<dbReference type="CORUM" id="Q99LC3"/>
<dbReference type="FunCoup" id="Q99LC3">
    <property type="interactions" value="1932"/>
</dbReference>
<dbReference type="IntAct" id="Q99LC3">
    <property type="interactions" value="7"/>
</dbReference>
<dbReference type="STRING" id="10090.ENSMUSP00000027478"/>
<dbReference type="GlyGen" id="Q99LC3">
    <property type="glycosylation" value="1 site, 1 O-linked glycan (1 site)"/>
</dbReference>
<dbReference type="iPTMnet" id="Q99LC3"/>
<dbReference type="PhosphoSitePlus" id="Q99LC3"/>
<dbReference type="SwissPalm" id="Q99LC3"/>
<dbReference type="REPRODUCTION-2DPAGE" id="Q99LC3"/>
<dbReference type="jPOST" id="Q99LC3"/>
<dbReference type="PaxDb" id="10090-ENSMUSP00000027478"/>
<dbReference type="PeptideAtlas" id="Q99LC3"/>
<dbReference type="ProteomicsDB" id="253046"/>
<dbReference type="Pumba" id="Q99LC3"/>
<dbReference type="Antibodypedia" id="34509">
    <property type="antibodies" value="193 antibodies from 30 providers"/>
</dbReference>
<dbReference type="DNASU" id="67273"/>
<dbReference type="Ensembl" id="ENSMUST00000027478.7">
    <property type="protein sequence ID" value="ENSMUSP00000027478.7"/>
    <property type="gene ID" value="ENSMUSG00000026260.13"/>
</dbReference>
<dbReference type="GeneID" id="67273"/>
<dbReference type="KEGG" id="mmu:67273"/>
<dbReference type="UCSC" id="uc007cbh.1">
    <property type="organism name" value="mouse"/>
</dbReference>
<dbReference type="AGR" id="MGI:1914523"/>
<dbReference type="CTD" id="4705"/>
<dbReference type="MGI" id="MGI:1914523">
    <property type="gene designation" value="Ndufa10"/>
</dbReference>
<dbReference type="VEuPathDB" id="HostDB:ENSMUSG00000026260"/>
<dbReference type="eggNOG" id="KOG3877">
    <property type="taxonomic scope" value="Eukaryota"/>
</dbReference>
<dbReference type="GeneTree" id="ENSGT00390000016151"/>
<dbReference type="HOGENOM" id="CLU_050591_0_0_1"/>
<dbReference type="InParanoid" id="Q99LC3"/>
<dbReference type="OMA" id="DPHNKKM"/>
<dbReference type="OrthoDB" id="17400at2759"/>
<dbReference type="PhylomeDB" id="Q99LC3"/>
<dbReference type="TreeFam" id="TF314616"/>
<dbReference type="Reactome" id="R-MMU-611105">
    <property type="pathway name" value="Respiratory electron transport"/>
</dbReference>
<dbReference type="Reactome" id="R-MMU-6799198">
    <property type="pathway name" value="Complex I biogenesis"/>
</dbReference>
<dbReference type="BioGRID-ORCS" id="67273">
    <property type="hits" value="21 hits in 78 CRISPR screens"/>
</dbReference>
<dbReference type="CD-CODE" id="CE726F99">
    <property type="entry name" value="Postsynaptic density"/>
</dbReference>
<dbReference type="ChiTaRS" id="Ndufa10">
    <property type="organism name" value="mouse"/>
</dbReference>
<dbReference type="PRO" id="PR:Q99LC3"/>
<dbReference type="Proteomes" id="UP000000589">
    <property type="component" value="Chromosome 1"/>
</dbReference>
<dbReference type="RNAct" id="Q99LC3">
    <property type="molecule type" value="protein"/>
</dbReference>
<dbReference type="Bgee" id="ENSMUSG00000026260">
    <property type="expression patterns" value="Expressed in heart right ventricle and 261 other cell types or tissues"/>
</dbReference>
<dbReference type="ExpressionAtlas" id="Q99LC3">
    <property type="expression patterns" value="baseline and differential"/>
</dbReference>
<dbReference type="GO" id="GO:0005743">
    <property type="term" value="C:mitochondrial inner membrane"/>
    <property type="evidence" value="ECO:0000314"/>
    <property type="project" value="UniProtKB"/>
</dbReference>
<dbReference type="GO" id="GO:0005759">
    <property type="term" value="C:mitochondrial matrix"/>
    <property type="evidence" value="ECO:0007669"/>
    <property type="project" value="UniProtKB-SubCell"/>
</dbReference>
<dbReference type="GO" id="GO:0005739">
    <property type="term" value="C:mitochondrion"/>
    <property type="evidence" value="ECO:0007005"/>
    <property type="project" value="MGI"/>
</dbReference>
<dbReference type="GO" id="GO:0043209">
    <property type="term" value="C:myelin sheath"/>
    <property type="evidence" value="ECO:0007005"/>
    <property type="project" value="UniProtKB"/>
</dbReference>
<dbReference type="GO" id="GO:0045271">
    <property type="term" value="C:respiratory chain complex I"/>
    <property type="evidence" value="ECO:0000314"/>
    <property type="project" value="UniProtKB"/>
</dbReference>
<dbReference type="GO" id="GO:0008137">
    <property type="term" value="F:NADH dehydrogenase (ubiquinone) activity"/>
    <property type="evidence" value="ECO:0000314"/>
    <property type="project" value="MGI"/>
</dbReference>
<dbReference type="GO" id="GO:0009060">
    <property type="term" value="P:aerobic respiration"/>
    <property type="evidence" value="ECO:0000303"/>
    <property type="project" value="ComplexPortal"/>
</dbReference>
<dbReference type="GO" id="GO:0006120">
    <property type="term" value="P:mitochondrial electron transport, NADH to ubiquinone"/>
    <property type="evidence" value="ECO:0000314"/>
    <property type="project" value="MGI"/>
</dbReference>
<dbReference type="GO" id="GO:0042776">
    <property type="term" value="P:proton motive force-driven mitochondrial ATP synthesis"/>
    <property type="evidence" value="ECO:0000303"/>
    <property type="project" value="ComplexPortal"/>
</dbReference>
<dbReference type="CDD" id="cd02030">
    <property type="entry name" value="NDUO42"/>
    <property type="match status" value="1"/>
</dbReference>
<dbReference type="FunFam" id="3.40.50.300:FF:000837">
    <property type="entry name" value="NADH dehydrogenase [ubiquinone] 1 alpha subcomplex subunit 10, mitochondrial"/>
    <property type="match status" value="1"/>
</dbReference>
<dbReference type="Gene3D" id="3.40.50.300">
    <property type="entry name" value="P-loop containing nucleotide triphosphate hydrolases"/>
    <property type="match status" value="1"/>
</dbReference>
<dbReference type="InterPro" id="IPR050566">
    <property type="entry name" value="Deoxyribonucleoside_kinase"/>
</dbReference>
<dbReference type="InterPro" id="IPR031314">
    <property type="entry name" value="DNK_dom"/>
</dbReference>
<dbReference type="InterPro" id="IPR015828">
    <property type="entry name" value="NDUFA10"/>
</dbReference>
<dbReference type="InterPro" id="IPR027417">
    <property type="entry name" value="P-loop_NTPase"/>
</dbReference>
<dbReference type="PANTHER" id="PTHR10513">
    <property type="entry name" value="DEOXYNUCLEOSIDE KINASE"/>
    <property type="match status" value="1"/>
</dbReference>
<dbReference type="PANTHER" id="PTHR10513:SF15">
    <property type="entry name" value="NADH DEHYDROGENASE [UBIQUINONE] 1 ALPHA SUBCOMPLEX SUBUNIT 10, MITOCHONDRIAL"/>
    <property type="match status" value="1"/>
</dbReference>
<dbReference type="Pfam" id="PF01712">
    <property type="entry name" value="dNK"/>
    <property type="match status" value="1"/>
</dbReference>
<dbReference type="PIRSF" id="PIRSF000543">
    <property type="entry name" value="NADH_UQ_42KD"/>
    <property type="match status" value="1"/>
</dbReference>
<dbReference type="SUPFAM" id="SSF52540">
    <property type="entry name" value="P-loop containing nucleoside triphosphate hydrolases"/>
    <property type="match status" value="1"/>
</dbReference>
<reference key="1">
    <citation type="journal article" date="2004" name="Genome Res.">
        <title>The status, quality, and expansion of the NIH full-length cDNA project: the Mammalian Gene Collection (MGC).</title>
        <authorList>
            <consortium name="The MGC Project Team"/>
        </authorList>
    </citation>
    <scope>NUCLEOTIDE SEQUENCE [LARGE SCALE MRNA]</scope>
</reference>
<reference key="2">
    <citation type="journal article" date="2005" name="Science">
        <title>The transcriptional landscape of the mammalian genome.</title>
        <authorList>
            <person name="Carninci P."/>
            <person name="Kasukawa T."/>
            <person name="Katayama S."/>
            <person name="Gough J."/>
            <person name="Frith M.C."/>
            <person name="Maeda N."/>
            <person name="Oyama R."/>
            <person name="Ravasi T."/>
            <person name="Lenhard B."/>
            <person name="Wells C."/>
            <person name="Kodzius R."/>
            <person name="Shimokawa K."/>
            <person name="Bajic V.B."/>
            <person name="Brenner S.E."/>
            <person name="Batalov S."/>
            <person name="Forrest A.R."/>
            <person name="Zavolan M."/>
            <person name="Davis M.J."/>
            <person name="Wilming L.G."/>
            <person name="Aidinis V."/>
            <person name="Allen J.E."/>
            <person name="Ambesi-Impiombato A."/>
            <person name="Apweiler R."/>
            <person name="Aturaliya R.N."/>
            <person name="Bailey T.L."/>
            <person name="Bansal M."/>
            <person name="Baxter L."/>
            <person name="Beisel K.W."/>
            <person name="Bersano T."/>
            <person name="Bono H."/>
            <person name="Chalk A.M."/>
            <person name="Chiu K.P."/>
            <person name="Choudhary V."/>
            <person name="Christoffels A."/>
            <person name="Clutterbuck D.R."/>
            <person name="Crowe M.L."/>
            <person name="Dalla E."/>
            <person name="Dalrymple B.P."/>
            <person name="de Bono B."/>
            <person name="Della Gatta G."/>
            <person name="di Bernardo D."/>
            <person name="Down T."/>
            <person name="Engstrom P."/>
            <person name="Fagiolini M."/>
            <person name="Faulkner G."/>
            <person name="Fletcher C.F."/>
            <person name="Fukushima T."/>
            <person name="Furuno M."/>
            <person name="Futaki S."/>
            <person name="Gariboldi M."/>
            <person name="Georgii-Hemming P."/>
            <person name="Gingeras T.R."/>
            <person name="Gojobori T."/>
            <person name="Green R.E."/>
            <person name="Gustincich S."/>
            <person name="Harbers M."/>
            <person name="Hayashi Y."/>
            <person name="Hensch T.K."/>
            <person name="Hirokawa N."/>
            <person name="Hill D."/>
            <person name="Huminiecki L."/>
            <person name="Iacono M."/>
            <person name="Ikeo K."/>
            <person name="Iwama A."/>
            <person name="Ishikawa T."/>
            <person name="Jakt M."/>
            <person name="Kanapin A."/>
            <person name="Katoh M."/>
            <person name="Kawasawa Y."/>
            <person name="Kelso J."/>
            <person name="Kitamura H."/>
            <person name="Kitano H."/>
            <person name="Kollias G."/>
            <person name="Krishnan S.P."/>
            <person name="Kruger A."/>
            <person name="Kummerfeld S.K."/>
            <person name="Kurochkin I.V."/>
            <person name="Lareau L.F."/>
            <person name="Lazarevic D."/>
            <person name="Lipovich L."/>
            <person name="Liu J."/>
            <person name="Liuni S."/>
            <person name="McWilliam S."/>
            <person name="Madan Babu M."/>
            <person name="Madera M."/>
            <person name="Marchionni L."/>
            <person name="Matsuda H."/>
            <person name="Matsuzawa S."/>
            <person name="Miki H."/>
            <person name="Mignone F."/>
            <person name="Miyake S."/>
            <person name="Morris K."/>
            <person name="Mottagui-Tabar S."/>
            <person name="Mulder N."/>
            <person name="Nakano N."/>
            <person name="Nakauchi H."/>
            <person name="Ng P."/>
            <person name="Nilsson R."/>
            <person name="Nishiguchi S."/>
            <person name="Nishikawa S."/>
            <person name="Nori F."/>
            <person name="Ohara O."/>
            <person name="Okazaki Y."/>
            <person name="Orlando V."/>
            <person name="Pang K.C."/>
            <person name="Pavan W.J."/>
            <person name="Pavesi G."/>
            <person name="Pesole G."/>
            <person name="Petrovsky N."/>
            <person name="Piazza S."/>
            <person name="Reed J."/>
            <person name="Reid J.F."/>
            <person name="Ring B.Z."/>
            <person name="Ringwald M."/>
            <person name="Rost B."/>
            <person name="Ruan Y."/>
            <person name="Salzberg S.L."/>
            <person name="Sandelin A."/>
            <person name="Schneider C."/>
            <person name="Schoenbach C."/>
            <person name="Sekiguchi K."/>
            <person name="Semple C.A."/>
            <person name="Seno S."/>
            <person name="Sessa L."/>
            <person name="Sheng Y."/>
            <person name="Shibata Y."/>
            <person name="Shimada H."/>
            <person name="Shimada K."/>
            <person name="Silva D."/>
            <person name="Sinclair B."/>
            <person name="Sperling S."/>
            <person name="Stupka E."/>
            <person name="Sugiura K."/>
            <person name="Sultana R."/>
            <person name="Takenaka Y."/>
            <person name="Taki K."/>
            <person name="Tammoja K."/>
            <person name="Tan S.L."/>
            <person name="Tang S."/>
            <person name="Taylor M.S."/>
            <person name="Tegner J."/>
            <person name="Teichmann S.A."/>
            <person name="Ueda H.R."/>
            <person name="van Nimwegen E."/>
            <person name="Verardo R."/>
            <person name="Wei C.L."/>
            <person name="Yagi K."/>
            <person name="Yamanishi H."/>
            <person name="Zabarovsky E."/>
            <person name="Zhu S."/>
            <person name="Zimmer A."/>
            <person name="Hide W."/>
            <person name="Bult C."/>
            <person name="Grimmond S.M."/>
            <person name="Teasdale R.D."/>
            <person name="Liu E.T."/>
            <person name="Brusic V."/>
            <person name="Quackenbush J."/>
            <person name="Wahlestedt C."/>
            <person name="Mattick J.S."/>
            <person name="Hume D.A."/>
            <person name="Kai C."/>
            <person name="Sasaki D."/>
            <person name="Tomaru Y."/>
            <person name="Fukuda S."/>
            <person name="Kanamori-Katayama M."/>
            <person name="Suzuki M."/>
            <person name="Aoki J."/>
            <person name="Arakawa T."/>
            <person name="Iida J."/>
            <person name="Imamura K."/>
            <person name="Itoh M."/>
            <person name="Kato T."/>
            <person name="Kawaji H."/>
            <person name="Kawagashira N."/>
            <person name="Kawashima T."/>
            <person name="Kojima M."/>
            <person name="Kondo S."/>
            <person name="Konno H."/>
            <person name="Nakano K."/>
            <person name="Ninomiya N."/>
            <person name="Nishio T."/>
            <person name="Okada M."/>
            <person name="Plessy C."/>
            <person name="Shibata K."/>
            <person name="Shiraki T."/>
            <person name="Suzuki S."/>
            <person name="Tagami M."/>
            <person name="Waki K."/>
            <person name="Watahiki A."/>
            <person name="Okamura-Oho Y."/>
            <person name="Suzuki H."/>
            <person name="Kawai J."/>
            <person name="Hayashizaki Y."/>
        </authorList>
    </citation>
    <scope>NUCLEOTIDE SEQUENCE [LARGE SCALE MRNA] OF 1-330</scope>
    <source>
        <strain>C57BL/6J</strain>
        <tissue>Brain</tissue>
        <tissue>Placenta</tissue>
    </source>
</reference>
<reference key="3">
    <citation type="submission" date="2007-04" db="UniProtKB">
        <authorList>
            <person name="Lubec G."/>
            <person name="Klug S."/>
            <person name="Kang S.U."/>
        </authorList>
    </citation>
    <scope>PROTEIN SEQUENCE OF 38-48; 59-70; 76-84; 131-161; 193-217; 229-243; 269-277; 286-295; 302-332 AND 339-350</scope>
    <scope>IDENTIFICATION BY MASS SPECTROMETRY</scope>
    <source>
        <strain>C57BL/6J</strain>
        <tissue>Brain</tissue>
        <tissue>Hippocampus</tissue>
    </source>
</reference>
<reference key="4">
    <citation type="journal article" date="2010" name="Cell">
        <title>A tissue-specific atlas of mouse protein phosphorylation and expression.</title>
        <authorList>
            <person name="Huttlin E.L."/>
            <person name="Jedrychowski M.P."/>
            <person name="Elias J.E."/>
            <person name="Goswami T."/>
            <person name="Rad R."/>
            <person name="Beausoleil S.A."/>
            <person name="Villen J."/>
            <person name="Haas W."/>
            <person name="Sowa M.E."/>
            <person name="Gygi S.P."/>
        </authorList>
    </citation>
    <scope>IDENTIFICATION BY MASS SPECTROMETRY [LARGE SCALE ANALYSIS]</scope>
    <source>
        <tissue>Brain</tissue>
        <tissue>Brown adipose tissue</tissue>
        <tissue>Heart</tissue>
        <tissue>Kidney</tissue>
        <tissue>Liver</tissue>
        <tissue>Lung</tissue>
        <tissue>Pancreas</tissue>
        <tissue>Spleen</tissue>
        <tissue>Testis</tissue>
    </source>
</reference>
<reference key="5">
    <citation type="journal article" date="2013" name="Mol. Cell">
        <title>SIRT5-mediated lysine desuccinylation impacts diverse metabolic pathways.</title>
        <authorList>
            <person name="Park J."/>
            <person name="Chen Y."/>
            <person name="Tishkoff D.X."/>
            <person name="Peng C."/>
            <person name="Tan M."/>
            <person name="Dai L."/>
            <person name="Xie Z."/>
            <person name="Zhang Y."/>
            <person name="Zwaans B.M."/>
            <person name="Skinner M.E."/>
            <person name="Lombard D.B."/>
            <person name="Zhao Y."/>
        </authorList>
    </citation>
    <scope>SUCCINYLATION [LARGE SCALE ANALYSIS] AT LYS-122 AND LYS-285</scope>
    <scope>IDENTIFICATION BY MASS SPECTROMETRY [LARGE SCALE ANALYSIS]</scope>
    <source>
        <tissue>Liver</tissue>
    </source>
</reference>
<reference key="6">
    <citation type="journal article" date="2013" name="Proc. Natl. Acad. Sci. U.S.A.">
        <title>Label-free quantitative proteomics of the lysine acetylome in mitochondria identifies substrates of SIRT3 in metabolic pathways.</title>
        <authorList>
            <person name="Rardin M.J."/>
            <person name="Newman J.C."/>
            <person name="Held J.M."/>
            <person name="Cusack M.P."/>
            <person name="Sorensen D.J."/>
            <person name="Li B."/>
            <person name="Schilling B."/>
            <person name="Mooney S.D."/>
            <person name="Kahn C.R."/>
            <person name="Verdin E."/>
            <person name="Gibson B.W."/>
        </authorList>
    </citation>
    <scope>ACETYLATION [LARGE SCALE ANALYSIS] AT LYS-122</scope>
    <scope>IDENTIFICATION BY MASS SPECTROMETRY [LARGE SCALE ANALYSIS]</scope>
    <source>
        <tissue>Liver</tissue>
    </source>
</reference>
<reference key="7">
    <citation type="journal article" date="2014" name="Science">
        <title>PINK1 loss-of-function mutations affect mitochondrial complex I activity via NdufA10 ubiquinone uncoupling.</title>
        <authorList>
            <person name="Morais V.A."/>
            <person name="Haddad D."/>
            <person name="Craessaerts K."/>
            <person name="De Bock P.J."/>
            <person name="Swerts J."/>
            <person name="Vilain S."/>
            <person name="Aerts L."/>
            <person name="Overbergh L."/>
            <person name="Gruenewald A."/>
            <person name="Seibler P."/>
            <person name="Klein C."/>
            <person name="Gevaert K."/>
            <person name="Verstreken P."/>
            <person name="De Strooper B."/>
        </authorList>
    </citation>
    <scope>FUNCTION</scope>
    <scope>PHOSPHORYLATION AT SER-250</scope>
    <scope>MUTAGENESIS OF SER-250</scope>
</reference>
<reference evidence="5" key="8">
    <citation type="journal article" date="2024" name="Nat. Struct. Mol. Biol.">
        <title>SCAF1 drives the compositional diversity of mammalian respirasomes.</title>
        <authorList>
            <person name="Vercellino I."/>
            <person name="Sazanov L.A."/>
        </authorList>
    </citation>
    <scope>STRUCTURE BY ELECTRON MICROSCOPY (3.60 ANGSTROMS) IN COMPLEX WITH MITOCHONDRIAL RESPIRATORY SUPERCOMPLEX</scope>
    <scope>FUNCTION</scope>
    <scope>SUBCELLULAR LOCATION</scope>
    <scope>SUBUNIT</scope>
</reference>
<feature type="transit peptide" description="Mitochondrion" evidence="1">
    <location>
        <begin position="1"/>
        <end position="35"/>
    </location>
</feature>
<feature type="chain" id="PRO_0000019989" description="NADH dehydrogenase [ubiquinone] 1 alpha subcomplex subunit 10, mitochondrial">
    <location>
        <begin position="36"/>
        <end position="355"/>
    </location>
</feature>
<feature type="modified residue" description="N6-acetyllysine; alternate" evidence="6">
    <location>
        <position position="122"/>
    </location>
</feature>
<feature type="modified residue" description="N6-succinyllysine; alternate" evidence="7">
    <location>
        <position position="122"/>
    </location>
</feature>
<feature type="modified residue" description="Phosphoserine; by PINK1" evidence="2">
    <location>
        <position position="250"/>
    </location>
</feature>
<feature type="modified residue" description="N6-succinyllysine" evidence="7">
    <location>
        <position position="285"/>
    </location>
</feature>
<feature type="mutagenesis site" description="Leads to mitochondrial depolarization." evidence="2">
    <original>S</original>
    <variation>A</variation>
    <location>
        <position position="250"/>
    </location>
</feature>
<feature type="mutagenesis site" description="Phosphomimetic mutant; able to rescue mitochondrial depolarization in a Pink1 mutant background." evidence="2">
    <original>S</original>
    <variation>D</variation>
    <location>
        <position position="250"/>
    </location>
</feature>
<feature type="sequence conflict" description="In Ref. 2; BAB23961." evidence="4" ref="2">
    <original>K</original>
    <variation>E</variation>
    <location>
        <position position="191"/>
    </location>
</feature>
<feature type="sequence conflict" description="In Ref. 2; BAC32674." evidence="4" ref="2">
    <original>P</original>
    <variation>T</variation>
    <location>
        <position position="266"/>
    </location>
</feature>
<feature type="sequence conflict" description="In Ref. 2; BAB23961." evidence="4" ref="2">
    <original>L</original>
    <variation>S</variation>
    <location>
        <position position="294"/>
    </location>
</feature>
<feature type="helix" evidence="9">
    <location>
        <begin position="40"/>
        <end position="44"/>
    </location>
</feature>
<feature type="turn" evidence="9">
    <location>
        <begin position="50"/>
        <end position="52"/>
    </location>
</feature>
<feature type="strand" evidence="9">
    <location>
        <begin position="59"/>
        <end position="65"/>
    </location>
</feature>
<feature type="helix" evidence="9">
    <location>
        <begin position="70"/>
        <end position="81"/>
    </location>
</feature>
<feature type="strand" evidence="10">
    <location>
        <begin position="84"/>
        <end position="86"/>
    </location>
</feature>
<feature type="helix" evidence="9">
    <location>
        <begin position="93"/>
        <end position="96"/>
    </location>
</feature>
<feature type="helix" evidence="9">
    <location>
        <begin position="106"/>
        <end position="108"/>
    </location>
</feature>
<feature type="helix" evidence="9">
    <location>
        <begin position="114"/>
        <end position="119"/>
    </location>
</feature>
<feature type="helix" evidence="9">
    <location>
        <begin position="127"/>
        <end position="153"/>
    </location>
</feature>
<feature type="strand" evidence="9">
    <location>
        <begin position="157"/>
        <end position="161"/>
    </location>
</feature>
<feature type="turn" evidence="9">
    <location>
        <begin position="163"/>
        <end position="166"/>
    </location>
</feature>
<feature type="helix" evidence="9">
    <location>
        <begin position="167"/>
        <end position="175"/>
    </location>
</feature>
<feature type="helix" evidence="9">
    <location>
        <begin position="181"/>
        <end position="194"/>
    </location>
</feature>
<feature type="helix" evidence="9">
    <location>
        <begin position="195"/>
        <end position="197"/>
    </location>
</feature>
<feature type="strand" evidence="9">
    <location>
        <begin position="202"/>
        <end position="208"/>
    </location>
</feature>
<feature type="helix" evidence="9">
    <location>
        <begin position="211"/>
        <end position="221"/>
    </location>
</feature>
<feature type="helix" evidence="9">
    <location>
        <begin position="226"/>
        <end position="228"/>
    </location>
</feature>
<feature type="helix" evidence="9">
    <location>
        <begin position="231"/>
        <end position="243"/>
    </location>
</feature>
<feature type="helix" evidence="9">
    <location>
        <begin position="245"/>
        <end position="250"/>
    </location>
</feature>
<feature type="strand" evidence="9">
    <location>
        <begin position="253"/>
        <end position="259"/>
    </location>
</feature>
<feature type="helix" evidence="9">
    <location>
        <begin position="260"/>
        <end position="263"/>
    </location>
</feature>
<feature type="helix" evidence="9">
    <location>
        <begin position="266"/>
        <end position="274"/>
    </location>
</feature>
<feature type="helix" evidence="9">
    <location>
        <begin position="282"/>
        <end position="285"/>
    </location>
</feature>
<feature type="helix" evidence="9">
    <location>
        <begin position="288"/>
        <end position="298"/>
    </location>
</feature>
<feature type="helix" evidence="9">
    <location>
        <begin position="301"/>
        <end position="304"/>
    </location>
</feature>
<feature type="helix" evidence="9">
    <location>
        <begin position="306"/>
        <end position="309"/>
    </location>
</feature>
<feature type="helix" evidence="9">
    <location>
        <begin position="315"/>
        <end position="317"/>
    </location>
</feature>
<feature type="helix" evidence="9">
    <location>
        <begin position="321"/>
        <end position="331"/>
    </location>
</feature>
<feature type="turn" evidence="9">
    <location>
        <begin position="335"/>
        <end position="337"/>
    </location>
</feature>
<feature type="strand" evidence="9">
    <location>
        <begin position="338"/>
        <end position="340"/>
    </location>
</feature>
<feature type="helix" evidence="8">
    <location>
        <begin position="341"/>
        <end position="343"/>
    </location>
</feature>
<feature type="helix" evidence="9">
    <location>
        <begin position="345"/>
        <end position="347"/>
    </location>
</feature>
<feature type="helix" evidence="9">
    <location>
        <begin position="352"/>
        <end position="354"/>
    </location>
</feature>
<protein>
    <recommendedName>
        <fullName>NADH dehydrogenase [ubiquinone] 1 alpha subcomplex subunit 10, mitochondrial</fullName>
    </recommendedName>
    <alternativeName>
        <fullName>Complex I-42kD</fullName>
        <shortName>CI-42kD</shortName>
    </alternativeName>
    <alternativeName>
        <fullName>NADH-ubiquinone oxidoreductase 42 kDa subunit</fullName>
    </alternativeName>
</protein>
<comment type="function">
    <text evidence="2 3">Accessory subunit of the mitochondrial membrane respiratory chain NADH dehydrogenase (Complex I), that is believed not to be involved in catalysis. Complex I functions in the transfer of electrons from NADH to the respiratory chain. The immediate electron acceptor for the enzyme is believed to be ubiquinone.</text>
</comment>
<comment type="cofactor">
    <cofactor>
        <name>FAD</name>
        <dbReference type="ChEBI" id="CHEBI:57692"/>
    </cofactor>
    <text>Binds 1 FAD per subunit.</text>
</comment>
<comment type="subunit">
    <text evidence="3">Complex I is composed of 45 different subunits (PubMed:38575788). This a component of the hydrophobic protein fraction (PubMed:38575788).</text>
</comment>
<comment type="subcellular location">
    <subcellularLocation>
        <location evidence="3">Mitochondrion matrix</location>
    </subcellularLocation>
</comment>
<comment type="PTM">
    <text evidence="2">Phosphorylation at Ser-250 by PINK1 is required for the binding and/or reduction of the complex I substrate ubiquinone.</text>
</comment>
<comment type="PTM">
    <text>Acetylation of Lys-242 is observed in liver mitochondria from fasted mice but not from fed mice.</text>
</comment>
<comment type="similarity">
    <text evidence="4">Belongs to the complex I NDUFA10 subunit family.</text>
</comment>
<comment type="sequence caution" evidence="4">
    <conflict type="erroneous initiation">
        <sequence resource="EMBL-CDS" id="BAB23961"/>
    </conflict>
</comment>
<name>NDUAA_MOUSE</name>
<accession>Q99LC3</accession>
<accession>Q3UKK0</accession>
<accession>Q8BL57</accession>
<accession>Q9CW21</accession>
<gene>
    <name type="primary">Ndufa10</name>
</gene>
<organism>
    <name type="scientific">Mus musculus</name>
    <name type="common">Mouse</name>
    <dbReference type="NCBI Taxonomy" id="10090"/>
    <lineage>
        <taxon>Eukaryota</taxon>
        <taxon>Metazoa</taxon>
        <taxon>Chordata</taxon>
        <taxon>Craniata</taxon>
        <taxon>Vertebrata</taxon>
        <taxon>Euteleostomi</taxon>
        <taxon>Mammalia</taxon>
        <taxon>Eutheria</taxon>
        <taxon>Euarchontoglires</taxon>
        <taxon>Glires</taxon>
        <taxon>Rodentia</taxon>
        <taxon>Myomorpha</taxon>
        <taxon>Muroidea</taxon>
        <taxon>Muridae</taxon>
        <taxon>Murinae</taxon>
        <taxon>Mus</taxon>
        <taxon>Mus</taxon>
    </lineage>
</organism>
<proteinExistence type="evidence at protein level"/>